<organism>
    <name type="scientific">Nematostella vectensis</name>
    <name type="common">Starlet sea anemone</name>
    <dbReference type="NCBI Taxonomy" id="45351"/>
    <lineage>
        <taxon>Eukaryota</taxon>
        <taxon>Metazoa</taxon>
        <taxon>Cnidaria</taxon>
        <taxon>Anthozoa</taxon>
        <taxon>Hexacorallia</taxon>
        <taxon>Actiniaria</taxon>
        <taxon>Edwardsiidae</taxon>
        <taxon>Nematostella</taxon>
    </lineage>
</organism>
<sequence length="429" mass="46548">MKNLIIRHARQVVLVCKNGERILKGEALKNIAILEGSVNRGISVVADEFGKIECIGYDDDVEPQYNQCSFASEIDATGMCVLPGLIDGHTHPVWVGDRVHEFAMKLAGASYMDVHKAGGGINFTVEHVHKATEDELYEPLKQRLNRMLQCGTTLVEAKSGYGLNTENEMKMLKVIERAKKELPIEISSTFCGAHAIPRGSTAKQAADNIINEQIPTLVKAIKAGELDVENIDVFCEKGVFEVEETRVILQAGKDAGLAINFHGDELHPIKGAELGAELGARAISHLEEISEEGIKAMSKSSVIGVLLPTTAYILRLKPPPARAMIDAGVAIALGTDFNPNAYCLSMPLTMHLACCILRMSMTEALAGATINAAASLGRADTHGSLEVGKFADMVVINAERWEHLIYQIGGHDDIIQHVVKHGKVVFSKR</sequence>
<protein>
    <recommendedName>
        <fullName>Probable imidazolonepropionase</fullName>
        <ecNumber>3.5.2.7</ecNumber>
    </recommendedName>
    <alternativeName>
        <fullName>Amidohydrolase domain-containing protein 1 homolog</fullName>
    </alternativeName>
</protein>
<dbReference type="EC" id="3.5.2.7"/>
<dbReference type="EMBL" id="DS469549">
    <property type="protein sequence ID" value="EDO43954.1"/>
    <property type="molecule type" value="Genomic_DNA"/>
</dbReference>
<dbReference type="RefSeq" id="XP_001636017.1">
    <property type="nucleotide sequence ID" value="XM_001635967.1"/>
</dbReference>
<dbReference type="SMR" id="A7RX26"/>
<dbReference type="STRING" id="45351.A7RX26"/>
<dbReference type="EnsemblMetazoa" id="EDO43954">
    <property type="protein sequence ID" value="EDO43954"/>
    <property type="gene ID" value="NEMVEDRAFT_v1g163675"/>
</dbReference>
<dbReference type="GeneID" id="5515844"/>
<dbReference type="KEGG" id="nve:5515844"/>
<dbReference type="eggNOG" id="KOG3968">
    <property type="taxonomic scope" value="Eukaryota"/>
</dbReference>
<dbReference type="HOGENOM" id="CLU_041647_2_0_1"/>
<dbReference type="InParanoid" id="A7RX26"/>
<dbReference type="OMA" id="CAPHARW"/>
<dbReference type="OrthoDB" id="194468at2759"/>
<dbReference type="PhylomeDB" id="A7RX26"/>
<dbReference type="UniPathway" id="UPA00379">
    <property type="reaction ID" value="UER00551"/>
</dbReference>
<dbReference type="Proteomes" id="UP000001593">
    <property type="component" value="Unassembled WGS sequence"/>
</dbReference>
<dbReference type="GO" id="GO:0005737">
    <property type="term" value="C:cytoplasm"/>
    <property type="evidence" value="ECO:0007669"/>
    <property type="project" value="InterPro"/>
</dbReference>
<dbReference type="GO" id="GO:0050480">
    <property type="term" value="F:imidazolonepropionase activity"/>
    <property type="evidence" value="ECO:0000318"/>
    <property type="project" value="GO_Central"/>
</dbReference>
<dbReference type="GO" id="GO:0046872">
    <property type="term" value="F:metal ion binding"/>
    <property type="evidence" value="ECO:0007669"/>
    <property type="project" value="UniProtKB-KW"/>
</dbReference>
<dbReference type="GO" id="GO:0006548">
    <property type="term" value="P:L-histidine catabolic process"/>
    <property type="evidence" value="ECO:0000318"/>
    <property type="project" value="GO_Central"/>
</dbReference>
<dbReference type="GO" id="GO:0019556">
    <property type="term" value="P:L-histidine catabolic process to glutamate and formamide"/>
    <property type="evidence" value="ECO:0007669"/>
    <property type="project" value="UniProtKB-UniPathway"/>
</dbReference>
<dbReference type="GO" id="GO:0019557">
    <property type="term" value="P:L-histidine catabolic process to glutamate and formate"/>
    <property type="evidence" value="ECO:0007669"/>
    <property type="project" value="UniProtKB-UniPathway"/>
</dbReference>
<dbReference type="CDD" id="cd01296">
    <property type="entry name" value="Imidazolone-5PH"/>
    <property type="match status" value="1"/>
</dbReference>
<dbReference type="FunFam" id="3.20.20.140:FF:000007">
    <property type="entry name" value="Imidazolonepropionase"/>
    <property type="match status" value="1"/>
</dbReference>
<dbReference type="Gene3D" id="3.20.20.140">
    <property type="entry name" value="Metal-dependent hydrolases"/>
    <property type="match status" value="1"/>
</dbReference>
<dbReference type="Gene3D" id="2.30.40.10">
    <property type="entry name" value="Urease, subunit C, domain 1"/>
    <property type="match status" value="1"/>
</dbReference>
<dbReference type="InterPro" id="IPR006680">
    <property type="entry name" value="Amidohydro-rel"/>
</dbReference>
<dbReference type="InterPro" id="IPR005920">
    <property type="entry name" value="HutI"/>
</dbReference>
<dbReference type="InterPro" id="IPR011059">
    <property type="entry name" value="Metal-dep_hydrolase_composite"/>
</dbReference>
<dbReference type="InterPro" id="IPR032466">
    <property type="entry name" value="Metal_Hydrolase"/>
</dbReference>
<dbReference type="NCBIfam" id="TIGR01224">
    <property type="entry name" value="hutI"/>
    <property type="match status" value="1"/>
</dbReference>
<dbReference type="PANTHER" id="PTHR42752">
    <property type="entry name" value="IMIDAZOLONEPROPIONASE"/>
    <property type="match status" value="1"/>
</dbReference>
<dbReference type="PANTHER" id="PTHR42752:SF1">
    <property type="entry name" value="IMIDAZOLONEPROPIONASE-RELATED"/>
    <property type="match status" value="1"/>
</dbReference>
<dbReference type="Pfam" id="PF01979">
    <property type="entry name" value="Amidohydro_1"/>
    <property type="match status" value="1"/>
</dbReference>
<dbReference type="SUPFAM" id="SSF51338">
    <property type="entry name" value="Composite domain of metallo-dependent hydrolases"/>
    <property type="match status" value="2"/>
</dbReference>
<dbReference type="SUPFAM" id="SSF51556">
    <property type="entry name" value="Metallo-dependent hydrolases"/>
    <property type="match status" value="1"/>
</dbReference>
<evidence type="ECO:0000250" key="1"/>
<evidence type="ECO:0000250" key="2">
    <source>
        <dbReference type="UniProtKB" id="A0KF84"/>
    </source>
</evidence>
<evidence type="ECO:0000250" key="3">
    <source>
        <dbReference type="UniProtKB" id="P42084"/>
    </source>
</evidence>
<evidence type="ECO:0000250" key="4">
    <source>
        <dbReference type="UniProtKB" id="Q8U8Z6"/>
    </source>
</evidence>
<evidence type="ECO:0000305" key="5"/>
<name>HUTI_NEMVE</name>
<feature type="chain" id="PRO_0000328425" description="Probable imidazolonepropionase">
    <location>
        <begin position="1"/>
        <end position="429"/>
    </location>
</feature>
<feature type="binding site" evidence="3">
    <location>
        <position position="161"/>
    </location>
    <ligand>
        <name>4-imidazolone-5-propanoate</name>
        <dbReference type="ChEBI" id="CHEBI:77893"/>
    </ligand>
</feature>
<feature type="binding site" evidence="4">
    <location>
        <position position="161"/>
    </location>
    <ligand>
        <name>N-formimidoyl-L-glutamate</name>
        <dbReference type="ChEBI" id="CHEBI:58928"/>
    </ligand>
</feature>
<feature type="binding site" evidence="3">
    <location>
        <position position="194"/>
    </location>
    <ligand>
        <name>4-imidazolone-5-propanoate</name>
        <dbReference type="ChEBI" id="CHEBI:77893"/>
    </ligand>
</feature>
<feature type="binding site" evidence="2">
    <location>
        <position position="262"/>
    </location>
    <ligand>
        <name>Fe(3+)</name>
        <dbReference type="ChEBI" id="CHEBI:29034"/>
    </ligand>
</feature>
<feature type="binding site" evidence="3">
    <location>
        <position position="262"/>
    </location>
    <ligand>
        <name>Zn(2+)</name>
        <dbReference type="ChEBI" id="CHEBI:29105"/>
    </ligand>
</feature>
<feature type="binding site" evidence="3">
    <location>
        <position position="265"/>
    </location>
    <ligand>
        <name>4-imidazolone-5-propanoate</name>
        <dbReference type="ChEBI" id="CHEBI:77893"/>
    </ligand>
</feature>
<feature type="binding site" evidence="2">
    <location>
        <position position="336"/>
    </location>
    <ligand>
        <name>Fe(3+)</name>
        <dbReference type="ChEBI" id="CHEBI:29034"/>
    </ligand>
</feature>
<feature type="binding site" evidence="3">
    <location>
        <position position="336"/>
    </location>
    <ligand>
        <name>Zn(2+)</name>
        <dbReference type="ChEBI" id="CHEBI:29105"/>
    </ligand>
</feature>
<feature type="binding site" evidence="4">
    <location>
        <position position="338"/>
    </location>
    <ligand>
        <name>N-formimidoyl-L-glutamate</name>
        <dbReference type="ChEBI" id="CHEBI:58928"/>
    </ligand>
</feature>
<proteinExistence type="inferred from homology"/>
<comment type="catalytic activity">
    <reaction>
        <text>4-imidazolone-5-propanoate + H2O = N-formimidoyl-L-glutamate</text>
        <dbReference type="Rhea" id="RHEA:23660"/>
        <dbReference type="ChEBI" id="CHEBI:15377"/>
        <dbReference type="ChEBI" id="CHEBI:58928"/>
        <dbReference type="ChEBI" id="CHEBI:77893"/>
        <dbReference type="EC" id="3.5.2.7"/>
    </reaction>
</comment>
<comment type="cofactor">
    <cofactor evidence="1">
        <name>Zn(2+)</name>
        <dbReference type="ChEBI" id="CHEBI:29105"/>
    </cofactor>
    <cofactor evidence="1">
        <name>Fe(3+)</name>
        <dbReference type="ChEBI" id="CHEBI:29034"/>
    </cofactor>
    <text evidence="1">Binds 1 zinc or iron ion per subunit.</text>
</comment>
<comment type="pathway">
    <text>Amino-acid degradation; L-histidine degradation into L-glutamate; N-formimidoyl-L-glutamate from L-histidine: step 3/3.</text>
</comment>
<comment type="similarity">
    <text evidence="5">Belongs to the metallo-dependent hydrolases superfamily. HutI family.</text>
</comment>
<gene>
    <name type="primary">amdhd1</name>
    <name type="ORF">v1g163675</name>
</gene>
<accession>A7RX26</accession>
<reference key="1">
    <citation type="journal article" date="2007" name="Science">
        <title>Sea anemone genome reveals ancestral eumetazoan gene repertoire and genomic organization.</title>
        <authorList>
            <person name="Putnam N.H."/>
            <person name="Srivastava M."/>
            <person name="Hellsten U."/>
            <person name="Dirks B."/>
            <person name="Chapman J."/>
            <person name="Salamov A."/>
            <person name="Terry A."/>
            <person name="Shapiro H."/>
            <person name="Lindquist E."/>
            <person name="Kapitonov V.V."/>
            <person name="Jurka J."/>
            <person name="Genikhovich G."/>
            <person name="Grigoriev I.V."/>
            <person name="Lucas S.M."/>
            <person name="Steele R.E."/>
            <person name="Finnerty J.R."/>
            <person name="Technau U."/>
            <person name="Martindale M.Q."/>
            <person name="Rokhsar D.S."/>
        </authorList>
    </citation>
    <scope>NUCLEOTIDE SEQUENCE [LARGE SCALE GENOMIC DNA]</scope>
    <source>
        <strain>CH2 X CH6</strain>
    </source>
</reference>
<keyword id="KW-0369">Histidine metabolism</keyword>
<keyword id="KW-0378">Hydrolase</keyword>
<keyword id="KW-0408">Iron</keyword>
<keyword id="KW-0479">Metal-binding</keyword>
<keyword id="KW-1185">Reference proteome</keyword>
<keyword id="KW-0862">Zinc</keyword>